<dbReference type="EC" id="4.3.1.17"/>
<dbReference type="EMBL" id="X98238">
    <property type="protein sequence ID" value="CAA66890.1"/>
    <property type="molecule type" value="Genomic_DNA"/>
</dbReference>
<dbReference type="SMR" id="Q48838"/>
<dbReference type="UniPathway" id="UPA00138"/>
<dbReference type="GO" id="GO:0051539">
    <property type="term" value="F:4 iron, 4 sulfur cluster binding"/>
    <property type="evidence" value="ECO:0007669"/>
    <property type="project" value="UniProtKB-KW"/>
</dbReference>
<dbReference type="GO" id="GO:0003941">
    <property type="term" value="F:L-serine ammonia-lyase activity"/>
    <property type="evidence" value="ECO:0007669"/>
    <property type="project" value="UniProtKB-EC"/>
</dbReference>
<dbReference type="GO" id="GO:0046872">
    <property type="term" value="F:metal ion binding"/>
    <property type="evidence" value="ECO:0007669"/>
    <property type="project" value="UniProtKB-KW"/>
</dbReference>
<dbReference type="GO" id="GO:0006094">
    <property type="term" value="P:gluconeogenesis"/>
    <property type="evidence" value="ECO:0007669"/>
    <property type="project" value="UniProtKB-UniPathway"/>
</dbReference>
<dbReference type="InterPro" id="IPR051318">
    <property type="entry name" value="Fe-S_L-Ser"/>
</dbReference>
<dbReference type="InterPro" id="IPR005130">
    <property type="entry name" value="Ser_deHydtase-like_asu"/>
</dbReference>
<dbReference type="InterPro" id="IPR004642">
    <property type="entry name" value="Ser_deHydtase_asu"/>
</dbReference>
<dbReference type="NCBIfam" id="TIGR00718">
    <property type="entry name" value="sda_alpha"/>
    <property type="match status" value="1"/>
</dbReference>
<dbReference type="PANTHER" id="PTHR30182">
    <property type="entry name" value="L-SERINE DEHYDRATASE"/>
    <property type="match status" value="1"/>
</dbReference>
<dbReference type="PANTHER" id="PTHR30182:SF1">
    <property type="entry name" value="L-SERINE DEHYDRATASE 1"/>
    <property type="match status" value="1"/>
</dbReference>
<dbReference type="Pfam" id="PF03313">
    <property type="entry name" value="SDH_alpha"/>
    <property type="match status" value="1"/>
</dbReference>
<name>SDHA_LATSK</name>
<gene>
    <name type="primary">sdhA</name>
</gene>
<sequence>DIMLEAVQNAIATNEVNASMGIICATPTAGSAGTLPGILSVITKQLSLDRDAQIRFLFCASAFGMVVANDAMIAGATGGCQAEVGSASAMGAAAAVEAAGGTHQQSSEAFAMAMSNLLGLVCDPVAGLVEVPCVKRNVIGSVNALTSADMALAGLVSKIPADEVISAMKSIGENLPSTLRETGLGGLAATPTGIALKMQIFGQDMSIDK</sequence>
<organism>
    <name type="scientific">Latilactobacillus sakei</name>
    <name type="common">Lactobacillus sakei</name>
    <dbReference type="NCBI Taxonomy" id="1599"/>
    <lineage>
        <taxon>Bacteria</taxon>
        <taxon>Bacillati</taxon>
        <taxon>Bacillota</taxon>
        <taxon>Bacilli</taxon>
        <taxon>Lactobacillales</taxon>
        <taxon>Lactobacillaceae</taxon>
        <taxon>Latilactobacillus</taxon>
    </lineage>
</organism>
<keyword id="KW-0004">4Fe-4S</keyword>
<keyword id="KW-0312">Gluconeogenesis</keyword>
<keyword id="KW-0408">Iron</keyword>
<keyword id="KW-0411">Iron-sulfur</keyword>
<keyword id="KW-0456">Lyase</keyword>
<keyword id="KW-0479">Metal-binding</keyword>
<comment type="catalytic activity">
    <reaction>
        <text>L-serine = pyruvate + NH4(+)</text>
        <dbReference type="Rhea" id="RHEA:19169"/>
        <dbReference type="ChEBI" id="CHEBI:15361"/>
        <dbReference type="ChEBI" id="CHEBI:28938"/>
        <dbReference type="ChEBI" id="CHEBI:33384"/>
        <dbReference type="EC" id="4.3.1.17"/>
    </reaction>
</comment>
<comment type="cofactor">
    <cofactor evidence="1">
        <name>[4Fe-4S] cluster</name>
        <dbReference type="ChEBI" id="CHEBI:49883"/>
    </cofactor>
    <text evidence="1">Binds 1 [4Fe-4S] cluster.</text>
</comment>
<comment type="pathway">
    <text>Carbohydrate biosynthesis; gluconeogenesis.</text>
</comment>
<comment type="subunit">
    <text evidence="1">Heterodimer of an alpha chain and a beta chain.</text>
</comment>
<comment type="similarity">
    <text evidence="2">Belongs to the iron-sulfur dependent L-serine dehydratase family.</text>
</comment>
<protein>
    <recommendedName>
        <fullName>Probable L-serine dehydratase, alpha chain</fullName>
        <shortName>SDH</shortName>
        <ecNumber>4.3.1.17</ecNumber>
    </recommendedName>
    <alternativeName>
        <fullName>L-serine deaminase</fullName>
        <shortName>L-SD</shortName>
    </alternativeName>
</protein>
<evidence type="ECO:0000250" key="1"/>
<evidence type="ECO:0000305" key="2"/>
<proteinExistence type="inferred from homology"/>
<accession>Q48838</accession>
<reference key="1">
    <citation type="submission" date="1996-06" db="EMBL/GenBank/DDBJ databases">
        <title>Isolation, characterization, and disruption of the putative exopolysaccharide gene cluster from Lactobactillus sake 0-1.</title>
        <authorList>
            <person name="van den Berg D.J.C."/>
            <person name="Toonen M.Y."/>
            <person name="Robijn G.W."/>
            <person name="Kamerling J.P."/>
            <person name="Vliegenthart J.F.G."/>
            <person name="van der Swaluw C.D.M."/>
            <person name="Ledoboer A.M."/>
            <person name="Verrips C.T."/>
        </authorList>
    </citation>
    <scope>NUCLEOTIDE SEQUENCE [GENOMIC DNA]</scope>
    <source>
        <strain>CBS 532.92 / 0-1</strain>
    </source>
</reference>
<feature type="chain" id="PRO_0000171914" description="Probable L-serine dehydratase, alpha chain">
    <location>
        <begin position="1" status="less than"/>
        <end position="209"/>
    </location>
</feature>
<feature type="non-terminal residue">
    <location>
        <position position="1"/>
    </location>
</feature>